<keyword id="KW-1185">Reference proteome</keyword>
<keyword id="KW-0833">Ubl conjugation pathway</keyword>
<dbReference type="EMBL" id="CR382135">
    <property type="protein sequence ID" value="CAG86143.1"/>
    <property type="molecule type" value="Genomic_DNA"/>
</dbReference>
<dbReference type="RefSeq" id="XP_458072.1">
    <property type="nucleotide sequence ID" value="XM_458072.1"/>
</dbReference>
<dbReference type="SMR" id="Q6BUP7"/>
<dbReference type="FunCoup" id="Q6BUP7">
    <property type="interactions" value="361"/>
</dbReference>
<dbReference type="STRING" id="284592.Q6BUP7"/>
<dbReference type="GeneID" id="2900171"/>
<dbReference type="KEGG" id="dha:DEHA2C09086g"/>
<dbReference type="VEuPathDB" id="FungiDB:DEHA2C09086g"/>
<dbReference type="eggNOG" id="KOG3493">
    <property type="taxonomic scope" value="Eukaryota"/>
</dbReference>
<dbReference type="HOGENOM" id="CLU_156193_2_0_1"/>
<dbReference type="InParanoid" id="Q6BUP7"/>
<dbReference type="OMA" id="GMSLEMQ"/>
<dbReference type="OrthoDB" id="3881at2759"/>
<dbReference type="Proteomes" id="UP000000599">
    <property type="component" value="Chromosome C"/>
</dbReference>
<dbReference type="GO" id="GO:0005737">
    <property type="term" value="C:cytoplasm"/>
    <property type="evidence" value="ECO:0007669"/>
    <property type="project" value="EnsemblFungi"/>
</dbReference>
<dbReference type="GO" id="GO:0005634">
    <property type="term" value="C:nucleus"/>
    <property type="evidence" value="ECO:0007669"/>
    <property type="project" value="EnsemblFungi"/>
</dbReference>
<dbReference type="GO" id="GO:0031386">
    <property type="term" value="F:protein tag activity"/>
    <property type="evidence" value="ECO:0007669"/>
    <property type="project" value="EnsemblFungi"/>
</dbReference>
<dbReference type="GO" id="GO:0000753">
    <property type="term" value="P:cell morphogenesis involved in conjugation with cellular fusion"/>
    <property type="evidence" value="ECO:0007669"/>
    <property type="project" value="EnsemblFungi"/>
</dbReference>
<dbReference type="GO" id="GO:0045292">
    <property type="term" value="P:mRNA cis splicing, via spliceosome"/>
    <property type="evidence" value="ECO:0007669"/>
    <property type="project" value="EnsemblFungi"/>
</dbReference>
<dbReference type="GO" id="GO:0033120">
    <property type="term" value="P:positive regulation of RNA splicing"/>
    <property type="evidence" value="ECO:0007669"/>
    <property type="project" value="EnsemblFungi"/>
</dbReference>
<dbReference type="GO" id="GO:0043687">
    <property type="term" value="P:post-translational protein modification"/>
    <property type="evidence" value="ECO:0007669"/>
    <property type="project" value="EnsemblFungi"/>
</dbReference>
<dbReference type="CDD" id="cd01791">
    <property type="entry name" value="Ubl_UBL5"/>
    <property type="match status" value="1"/>
</dbReference>
<dbReference type="FunFam" id="3.10.20.90:FF:000052">
    <property type="entry name" value="Ubiquitin-like protein 5"/>
    <property type="match status" value="1"/>
</dbReference>
<dbReference type="Gene3D" id="3.10.20.90">
    <property type="entry name" value="Phosphatidylinositol 3-kinase Catalytic Subunit, Chain A, domain 1"/>
    <property type="match status" value="1"/>
</dbReference>
<dbReference type="InterPro" id="IPR039732">
    <property type="entry name" value="Hub1/Ubl5"/>
</dbReference>
<dbReference type="InterPro" id="IPR029071">
    <property type="entry name" value="Ubiquitin-like_domsf"/>
</dbReference>
<dbReference type="PANTHER" id="PTHR13042">
    <property type="entry name" value="UBIQUITIN-LIKE PROTEIN 5"/>
    <property type="match status" value="1"/>
</dbReference>
<dbReference type="SUPFAM" id="SSF54236">
    <property type="entry name" value="Ubiquitin-like"/>
    <property type="match status" value="1"/>
</dbReference>
<organism>
    <name type="scientific">Debaryomyces hansenii (strain ATCC 36239 / CBS 767 / BCRC 21394 / JCM 1990 / NBRC 0083 / IGC 2968)</name>
    <name type="common">Yeast</name>
    <name type="synonym">Torulaspora hansenii</name>
    <dbReference type="NCBI Taxonomy" id="284592"/>
    <lineage>
        <taxon>Eukaryota</taxon>
        <taxon>Fungi</taxon>
        <taxon>Dikarya</taxon>
        <taxon>Ascomycota</taxon>
        <taxon>Saccharomycotina</taxon>
        <taxon>Pichiomycetes</taxon>
        <taxon>Debaryomycetaceae</taxon>
        <taxon>Debaryomyces</taxon>
    </lineage>
</organism>
<gene>
    <name type="primary">HUB1</name>
    <name type="ordered locus">DEHA2C09086g</name>
</gene>
<name>HUB1_DEBHA</name>
<feature type="chain" id="PRO_0000114876" description="Ubiquitin-like modifier HUB1">
    <location>
        <begin position="1"/>
        <end position="73"/>
    </location>
</feature>
<feature type="domain" description="Ubiquitin-like">
    <location>
        <begin position="1"/>
        <end position="73"/>
    </location>
</feature>
<accession>Q6BUP7</accession>
<reference key="1">
    <citation type="journal article" date="2004" name="Nature">
        <title>Genome evolution in yeasts.</title>
        <authorList>
            <person name="Dujon B."/>
            <person name="Sherman D."/>
            <person name="Fischer G."/>
            <person name="Durrens P."/>
            <person name="Casaregola S."/>
            <person name="Lafontaine I."/>
            <person name="de Montigny J."/>
            <person name="Marck C."/>
            <person name="Neuveglise C."/>
            <person name="Talla E."/>
            <person name="Goffard N."/>
            <person name="Frangeul L."/>
            <person name="Aigle M."/>
            <person name="Anthouard V."/>
            <person name="Babour A."/>
            <person name="Barbe V."/>
            <person name="Barnay S."/>
            <person name="Blanchin S."/>
            <person name="Beckerich J.-M."/>
            <person name="Beyne E."/>
            <person name="Bleykasten C."/>
            <person name="Boisrame A."/>
            <person name="Boyer J."/>
            <person name="Cattolico L."/>
            <person name="Confanioleri F."/>
            <person name="de Daruvar A."/>
            <person name="Despons L."/>
            <person name="Fabre E."/>
            <person name="Fairhead C."/>
            <person name="Ferry-Dumazet H."/>
            <person name="Groppi A."/>
            <person name="Hantraye F."/>
            <person name="Hennequin C."/>
            <person name="Jauniaux N."/>
            <person name="Joyet P."/>
            <person name="Kachouri R."/>
            <person name="Kerrest A."/>
            <person name="Koszul R."/>
            <person name="Lemaire M."/>
            <person name="Lesur I."/>
            <person name="Ma L."/>
            <person name="Muller H."/>
            <person name="Nicaud J.-M."/>
            <person name="Nikolski M."/>
            <person name="Oztas S."/>
            <person name="Ozier-Kalogeropoulos O."/>
            <person name="Pellenz S."/>
            <person name="Potier S."/>
            <person name="Richard G.-F."/>
            <person name="Straub M.-L."/>
            <person name="Suleau A."/>
            <person name="Swennen D."/>
            <person name="Tekaia F."/>
            <person name="Wesolowski-Louvel M."/>
            <person name="Westhof E."/>
            <person name="Wirth B."/>
            <person name="Zeniou-Meyer M."/>
            <person name="Zivanovic Y."/>
            <person name="Bolotin-Fukuhara M."/>
            <person name="Thierry A."/>
            <person name="Bouchier C."/>
            <person name="Caudron B."/>
            <person name="Scarpelli C."/>
            <person name="Gaillardin C."/>
            <person name="Weissenbach J."/>
            <person name="Wincker P."/>
            <person name="Souciet J.-L."/>
        </authorList>
    </citation>
    <scope>NUCLEOTIDE SEQUENCE [LARGE SCALE GENOMIC DNA]</scope>
    <source>
        <strain>ATCC 36239 / CBS 767 / BCRC 21394 / JCM 1990 / NBRC 0083 / IGC 2968</strain>
    </source>
</reference>
<protein>
    <recommendedName>
        <fullName>Ubiquitin-like modifier HUB1</fullName>
    </recommendedName>
</protein>
<proteinExistence type="predicted"/>
<sequence length="73" mass="8487">MIEVLANDRLGKKIKVKCMPTDTIGDLKKIISLQIGTSYEKIVLKKGYQVYKDHITLDDYEVHNGFNFELYYS</sequence>